<sequence>MAVQAPEVDKLSLNEESVAKAPTKGSAAQGTAGDEDAENEESDEDDDQGVAEGAVATGDKKKRKRKPKKKKKKGVAKVQSNPPRVPLSTLFPNSQYPEGDIVEYKDDNAYRTTNEEKRHLDRMNNDFLSDYRQAAEIHRQVRQYAQKELIKPGRSLTEIAEGIEDSVRALTGHMGLEEGDSLVAGMGFPTGLNINHCAAHYSPNAGNKMVLQHGDVMKVDFGVHVNGRIVDSAFTVAFDPVYDNLLEAVKDATNTGIREAGIDVRMSDIGAAIQEAMESYEVELNGTTYPVKAIRNLNGHTIGHYLIHGGSTGKSVPIVKGGDQTKMEEGETYAIETFGSTGKGYVRDDMEVSHYARVPDAPNVPLRLSSAKNLLNVITKNFGTLPFCRRYLDRLGQDKYLLGLNNLVSSGLVDAYPPLVDVKGSYTAQFEHTILLRPNVKEVITRGDDY</sequence>
<dbReference type="EC" id="3.4.11.18" evidence="1"/>
<dbReference type="EMBL" id="CH476617">
    <property type="protein sequence ID" value="EEP80723.1"/>
    <property type="molecule type" value="Genomic_DNA"/>
</dbReference>
<dbReference type="RefSeq" id="XP_002584876.1">
    <property type="nucleotide sequence ID" value="XM_002584830.1"/>
</dbReference>
<dbReference type="SMR" id="C4JSX6"/>
<dbReference type="FunCoup" id="C4JSX6">
    <property type="interactions" value="1056"/>
</dbReference>
<dbReference type="STRING" id="336963.C4JSX6"/>
<dbReference type="GeneID" id="8441071"/>
<dbReference type="KEGG" id="ure:UREG_05565"/>
<dbReference type="VEuPathDB" id="FungiDB:UREG_05565"/>
<dbReference type="eggNOG" id="KOG2775">
    <property type="taxonomic scope" value="Eukaryota"/>
</dbReference>
<dbReference type="HOGENOM" id="CLU_015857_7_1_1"/>
<dbReference type="InParanoid" id="C4JSX6"/>
<dbReference type="OMA" id="PFAKRWL"/>
<dbReference type="OrthoDB" id="7848262at2759"/>
<dbReference type="Proteomes" id="UP000002058">
    <property type="component" value="Unassembled WGS sequence"/>
</dbReference>
<dbReference type="GO" id="GO:0005737">
    <property type="term" value="C:cytoplasm"/>
    <property type="evidence" value="ECO:0007669"/>
    <property type="project" value="UniProtKB-SubCell"/>
</dbReference>
<dbReference type="GO" id="GO:0004239">
    <property type="term" value="F:initiator methionyl aminopeptidase activity"/>
    <property type="evidence" value="ECO:0007669"/>
    <property type="project" value="UniProtKB-UniRule"/>
</dbReference>
<dbReference type="GO" id="GO:0046872">
    <property type="term" value="F:metal ion binding"/>
    <property type="evidence" value="ECO:0007669"/>
    <property type="project" value="UniProtKB-UniRule"/>
</dbReference>
<dbReference type="GO" id="GO:0070006">
    <property type="term" value="F:metalloaminopeptidase activity"/>
    <property type="evidence" value="ECO:0007669"/>
    <property type="project" value="UniProtKB-UniRule"/>
</dbReference>
<dbReference type="GO" id="GO:0006508">
    <property type="term" value="P:proteolysis"/>
    <property type="evidence" value="ECO:0007669"/>
    <property type="project" value="UniProtKB-KW"/>
</dbReference>
<dbReference type="CDD" id="cd01088">
    <property type="entry name" value="MetAP2"/>
    <property type="match status" value="1"/>
</dbReference>
<dbReference type="Gene3D" id="3.90.230.10">
    <property type="entry name" value="Creatinase/methionine aminopeptidase superfamily"/>
    <property type="match status" value="1"/>
</dbReference>
<dbReference type="Gene3D" id="1.10.10.10">
    <property type="entry name" value="Winged helix-like DNA-binding domain superfamily/Winged helix DNA-binding domain"/>
    <property type="match status" value="1"/>
</dbReference>
<dbReference type="HAMAP" id="MF_03175">
    <property type="entry name" value="MetAP_2_euk"/>
    <property type="match status" value="1"/>
</dbReference>
<dbReference type="InterPro" id="IPR036005">
    <property type="entry name" value="Creatinase/aminopeptidase-like"/>
</dbReference>
<dbReference type="InterPro" id="IPR050247">
    <property type="entry name" value="Met_Aminopeptidase_Type2"/>
</dbReference>
<dbReference type="InterPro" id="IPR000994">
    <property type="entry name" value="Pept_M24"/>
</dbReference>
<dbReference type="InterPro" id="IPR001714">
    <property type="entry name" value="Pept_M24_MAP"/>
</dbReference>
<dbReference type="InterPro" id="IPR002468">
    <property type="entry name" value="Pept_M24A_MAP2"/>
</dbReference>
<dbReference type="InterPro" id="IPR018349">
    <property type="entry name" value="Pept_M24A_MAP2_BS"/>
</dbReference>
<dbReference type="InterPro" id="IPR036388">
    <property type="entry name" value="WH-like_DNA-bd_sf"/>
</dbReference>
<dbReference type="InterPro" id="IPR036390">
    <property type="entry name" value="WH_DNA-bd_sf"/>
</dbReference>
<dbReference type="NCBIfam" id="TIGR00501">
    <property type="entry name" value="met_pdase_II"/>
    <property type="match status" value="1"/>
</dbReference>
<dbReference type="PANTHER" id="PTHR45777">
    <property type="entry name" value="METHIONINE AMINOPEPTIDASE 2"/>
    <property type="match status" value="1"/>
</dbReference>
<dbReference type="PANTHER" id="PTHR45777:SF2">
    <property type="entry name" value="METHIONINE AMINOPEPTIDASE 2"/>
    <property type="match status" value="1"/>
</dbReference>
<dbReference type="Pfam" id="PF00557">
    <property type="entry name" value="Peptidase_M24"/>
    <property type="match status" value="1"/>
</dbReference>
<dbReference type="PRINTS" id="PR00599">
    <property type="entry name" value="MAPEPTIDASE"/>
</dbReference>
<dbReference type="SUPFAM" id="SSF55920">
    <property type="entry name" value="Creatinase/aminopeptidase"/>
    <property type="match status" value="1"/>
</dbReference>
<dbReference type="SUPFAM" id="SSF46785">
    <property type="entry name" value="Winged helix' DNA-binding domain"/>
    <property type="match status" value="1"/>
</dbReference>
<dbReference type="PROSITE" id="PS01202">
    <property type="entry name" value="MAP_2"/>
    <property type="match status" value="1"/>
</dbReference>
<reference key="1">
    <citation type="journal article" date="2009" name="Genome Res.">
        <title>Comparative genomic analyses of the human fungal pathogens Coccidioides and their relatives.</title>
        <authorList>
            <person name="Sharpton T.J."/>
            <person name="Stajich J.E."/>
            <person name="Rounsley S.D."/>
            <person name="Gardner M.J."/>
            <person name="Wortman J.R."/>
            <person name="Jordar V.S."/>
            <person name="Maiti R."/>
            <person name="Kodira C.D."/>
            <person name="Neafsey D.E."/>
            <person name="Zeng Q."/>
            <person name="Hung C.-Y."/>
            <person name="McMahan C."/>
            <person name="Muszewska A."/>
            <person name="Grynberg M."/>
            <person name="Mandel M.A."/>
            <person name="Kellner E.M."/>
            <person name="Barker B.M."/>
            <person name="Galgiani J.N."/>
            <person name="Orbach M.J."/>
            <person name="Kirkland T.N."/>
            <person name="Cole G.T."/>
            <person name="Henn M.R."/>
            <person name="Birren B.W."/>
            <person name="Taylor J.W."/>
        </authorList>
    </citation>
    <scope>NUCLEOTIDE SEQUENCE [LARGE SCALE GENOMIC DNA]</scope>
    <source>
        <strain>UAMH 1704</strain>
    </source>
</reference>
<proteinExistence type="inferred from homology"/>
<protein>
    <recommendedName>
        <fullName evidence="1">Methionine aminopeptidase 2</fullName>
        <shortName evidence="1">MAP 2</shortName>
        <shortName evidence="1">MetAP 2</shortName>
        <ecNumber evidence="1">3.4.11.18</ecNumber>
    </recommendedName>
    <alternativeName>
        <fullName evidence="1">Peptidase M</fullName>
    </alternativeName>
</protein>
<accession>C4JSX6</accession>
<name>MAP2_UNCRE</name>
<comment type="function">
    <text evidence="1">Cotranslationally removes the N-terminal methionine from nascent proteins. The N-terminal methionine is often cleaved when the second residue in the primary sequence is small and uncharged (Met-Ala-, Cys, Gly, Pro, Ser, Thr, or Val).</text>
</comment>
<comment type="catalytic activity">
    <reaction evidence="1">
        <text>Release of N-terminal amino acids, preferentially methionine, from peptides and arylamides.</text>
        <dbReference type="EC" id="3.4.11.18"/>
    </reaction>
</comment>
<comment type="cofactor">
    <cofactor evidence="1">
        <name>Co(2+)</name>
        <dbReference type="ChEBI" id="CHEBI:48828"/>
    </cofactor>
    <cofactor evidence="1">
        <name>Zn(2+)</name>
        <dbReference type="ChEBI" id="CHEBI:29105"/>
    </cofactor>
    <cofactor evidence="1">
        <name>Mn(2+)</name>
        <dbReference type="ChEBI" id="CHEBI:29035"/>
    </cofactor>
    <cofactor evidence="1">
        <name>Fe(2+)</name>
        <dbReference type="ChEBI" id="CHEBI:29033"/>
    </cofactor>
    <text evidence="1">Binds 2 divalent metal cations per subunit. Has a high-affinity and a low affinity metal-binding site. The true nature of the physiological cofactor is under debate. The enzyme is active with cobalt, zinc, manganese or divalent iron ions. Most likely, methionine aminopeptidases function as mononuclear Fe(2+)-metalloproteases under physiological conditions, and the catalytically relevant metal-binding site has been assigned to the histidine-containing high-affinity site.</text>
</comment>
<comment type="subcellular location">
    <subcellularLocation>
        <location evidence="1">Cytoplasm</location>
    </subcellularLocation>
</comment>
<comment type="similarity">
    <text evidence="1">Belongs to the peptidase M24A family. Methionine aminopeptidase eukaryotic type 2 subfamily.</text>
</comment>
<evidence type="ECO:0000255" key="1">
    <source>
        <dbReference type="HAMAP-Rule" id="MF_03175"/>
    </source>
</evidence>
<evidence type="ECO:0000256" key="2">
    <source>
        <dbReference type="SAM" id="MobiDB-lite"/>
    </source>
</evidence>
<keyword id="KW-0031">Aminopeptidase</keyword>
<keyword id="KW-0963">Cytoplasm</keyword>
<keyword id="KW-0378">Hydrolase</keyword>
<keyword id="KW-0479">Metal-binding</keyword>
<keyword id="KW-0645">Protease</keyword>
<keyword id="KW-1185">Reference proteome</keyword>
<organism>
    <name type="scientific">Uncinocarpus reesii (strain UAMH 1704)</name>
    <dbReference type="NCBI Taxonomy" id="336963"/>
    <lineage>
        <taxon>Eukaryota</taxon>
        <taxon>Fungi</taxon>
        <taxon>Dikarya</taxon>
        <taxon>Ascomycota</taxon>
        <taxon>Pezizomycotina</taxon>
        <taxon>Eurotiomycetes</taxon>
        <taxon>Eurotiomycetidae</taxon>
        <taxon>Onygenales</taxon>
        <taxon>Onygenaceae</taxon>
        <taxon>Uncinocarpus</taxon>
    </lineage>
</organism>
<feature type="chain" id="PRO_0000407671" description="Methionine aminopeptidase 2">
    <location>
        <begin position="1"/>
        <end position="450"/>
    </location>
</feature>
<feature type="region of interest" description="Disordered" evidence="2">
    <location>
        <begin position="1"/>
        <end position="99"/>
    </location>
</feature>
<feature type="compositionally biased region" description="Acidic residues" evidence="2">
    <location>
        <begin position="33"/>
        <end position="49"/>
    </location>
</feature>
<feature type="compositionally biased region" description="Basic residues" evidence="2">
    <location>
        <begin position="60"/>
        <end position="75"/>
    </location>
</feature>
<feature type="binding site" evidence="1">
    <location>
        <position position="200"/>
    </location>
    <ligand>
        <name>substrate</name>
    </ligand>
</feature>
<feature type="binding site" evidence="1">
    <location>
        <position position="220"/>
    </location>
    <ligand>
        <name>a divalent metal cation</name>
        <dbReference type="ChEBI" id="CHEBI:60240"/>
        <label>1</label>
    </ligand>
</feature>
<feature type="binding site" evidence="1">
    <location>
        <position position="231"/>
    </location>
    <ligand>
        <name>a divalent metal cation</name>
        <dbReference type="ChEBI" id="CHEBI:60240"/>
        <label>1</label>
    </ligand>
</feature>
<feature type="binding site" evidence="1">
    <location>
        <position position="231"/>
    </location>
    <ligand>
        <name>a divalent metal cation</name>
        <dbReference type="ChEBI" id="CHEBI:60240"/>
        <label>2</label>
        <note>catalytic</note>
    </ligand>
</feature>
<feature type="binding site" evidence="1">
    <location>
        <position position="300"/>
    </location>
    <ligand>
        <name>a divalent metal cation</name>
        <dbReference type="ChEBI" id="CHEBI:60240"/>
        <label>2</label>
        <note>catalytic</note>
    </ligand>
</feature>
<feature type="binding site" evidence="1">
    <location>
        <position position="308"/>
    </location>
    <ligand>
        <name>substrate</name>
    </ligand>
</feature>
<feature type="binding site" evidence="1">
    <location>
        <position position="336"/>
    </location>
    <ligand>
        <name>a divalent metal cation</name>
        <dbReference type="ChEBI" id="CHEBI:60240"/>
        <label>2</label>
        <note>catalytic</note>
    </ligand>
</feature>
<feature type="binding site" evidence="1">
    <location>
        <position position="431"/>
    </location>
    <ligand>
        <name>a divalent metal cation</name>
        <dbReference type="ChEBI" id="CHEBI:60240"/>
        <label>1</label>
    </ligand>
</feature>
<feature type="binding site" evidence="1">
    <location>
        <position position="431"/>
    </location>
    <ligand>
        <name>a divalent metal cation</name>
        <dbReference type="ChEBI" id="CHEBI:60240"/>
        <label>2</label>
        <note>catalytic</note>
    </ligand>
</feature>
<gene>
    <name type="ORF">UREG_05565</name>
</gene>